<sequence length="92" mass="10468">MTINRWHLLVSGKVQGVYYRASTEQKARELGLTGWVRNLPDGRVEIVAEGEPLQLKALHEWCHEGPERAVVDEVAAQELPATQEFTDFRTTH</sequence>
<evidence type="ECO:0000255" key="1">
    <source>
        <dbReference type="PROSITE-ProRule" id="PRU00520"/>
    </source>
</evidence>
<evidence type="ECO:0000305" key="2"/>
<feature type="chain" id="PRO_0000326744" description="Acylphosphatase">
    <location>
        <begin position="1"/>
        <end position="92"/>
    </location>
</feature>
<feature type="domain" description="Acylphosphatase-like" evidence="1">
    <location>
        <begin position="5"/>
        <end position="92"/>
    </location>
</feature>
<feature type="active site" evidence="1">
    <location>
        <position position="20"/>
    </location>
</feature>
<feature type="active site" evidence="1">
    <location>
        <position position="38"/>
    </location>
</feature>
<organism>
    <name type="scientific">Marinobacter nauticus (strain ATCC 700491 / DSM 11845 / VT8)</name>
    <name type="common">Marinobacter aquaeolei</name>
    <dbReference type="NCBI Taxonomy" id="351348"/>
    <lineage>
        <taxon>Bacteria</taxon>
        <taxon>Pseudomonadati</taxon>
        <taxon>Pseudomonadota</taxon>
        <taxon>Gammaproteobacteria</taxon>
        <taxon>Pseudomonadales</taxon>
        <taxon>Marinobacteraceae</taxon>
        <taxon>Marinobacter</taxon>
    </lineage>
</organism>
<accession>A1TZV5</accession>
<reference key="1">
    <citation type="journal article" date="2011" name="Appl. Environ. Microbiol.">
        <title>Genomic potential of Marinobacter aquaeolei, a biogeochemical 'opportunitroph'.</title>
        <authorList>
            <person name="Singer E."/>
            <person name="Webb E.A."/>
            <person name="Nelson W.C."/>
            <person name="Heidelberg J.F."/>
            <person name="Ivanova N."/>
            <person name="Pati A."/>
            <person name="Edwards K.J."/>
        </authorList>
    </citation>
    <scope>NUCLEOTIDE SEQUENCE [LARGE SCALE GENOMIC DNA]</scope>
    <source>
        <strain>ATCC 700491 / DSM 11845 / VT8</strain>
    </source>
</reference>
<gene>
    <name type="primary">acyP</name>
    <name type="ordered locus">Maqu_1183</name>
</gene>
<protein>
    <recommendedName>
        <fullName>Acylphosphatase</fullName>
        <ecNumber>3.6.1.7</ecNumber>
    </recommendedName>
    <alternativeName>
        <fullName>Acylphosphate phosphohydrolase</fullName>
    </alternativeName>
</protein>
<dbReference type="EC" id="3.6.1.7"/>
<dbReference type="EMBL" id="CP000514">
    <property type="protein sequence ID" value="ABM18274.1"/>
    <property type="molecule type" value="Genomic_DNA"/>
</dbReference>
<dbReference type="RefSeq" id="WP_011784691.1">
    <property type="nucleotide sequence ID" value="NC_008740.1"/>
</dbReference>
<dbReference type="SMR" id="A1TZV5"/>
<dbReference type="STRING" id="351348.Maqu_1183"/>
<dbReference type="GeneID" id="31821489"/>
<dbReference type="KEGG" id="maq:Maqu_1183"/>
<dbReference type="eggNOG" id="COG1254">
    <property type="taxonomic scope" value="Bacteria"/>
</dbReference>
<dbReference type="HOGENOM" id="CLU_141932_1_3_6"/>
<dbReference type="OrthoDB" id="5295388at2"/>
<dbReference type="Proteomes" id="UP000000998">
    <property type="component" value="Chromosome"/>
</dbReference>
<dbReference type="GO" id="GO:0003998">
    <property type="term" value="F:acylphosphatase activity"/>
    <property type="evidence" value="ECO:0007669"/>
    <property type="project" value="UniProtKB-EC"/>
</dbReference>
<dbReference type="Gene3D" id="3.30.70.100">
    <property type="match status" value="1"/>
</dbReference>
<dbReference type="InterPro" id="IPR020456">
    <property type="entry name" value="Acylphosphatase"/>
</dbReference>
<dbReference type="InterPro" id="IPR001792">
    <property type="entry name" value="Acylphosphatase-like_dom"/>
</dbReference>
<dbReference type="InterPro" id="IPR036046">
    <property type="entry name" value="Acylphosphatase-like_dom_sf"/>
</dbReference>
<dbReference type="InterPro" id="IPR017968">
    <property type="entry name" value="Acylphosphatase_CS"/>
</dbReference>
<dbReference type="PANTHER" id="PTHR47268">
    <property type="entry name" value="ACYLPHOSPHATASE"/>
    <property type="match status" value="1"/>
</dbReference>
<dbReference type="PANTHER" id="PTHR47268:SF4">
    <property type="entry name" value="ACYLPHOSPHATASE"/>
    <property type="match status" value="1"/>
</dbReference>
<dbReference type="Pfam" id="PF00708">
    <property type="entry name" value="Acylphosphatase"/>
    <property type="match status" value="1"/>
</dbReference>
<dbReference type="PRINTS" id="PR00112">
    <property type="entry name" value="ACYLPHPHTASE"/>
</dbReference>
<dbReference type="SUPFAM" id="SSF54975">
    <property type="entry name" value="Acylphosphatase/BLUF domain-like"/>
    <property type="match status" value="1"/>
</dbReference>
<dbReference type="PROSITE" id="PS00151">
    <property type="entry name" value="ACYLPHOSPHATASE_2"/>
    <property type="match status" value="1"/>
</dbReference>
<dbReference type="PROSITE" id="PS51160">
    <property type="entry name" value="ACYLPHOSPHATASE_3"/>
    <property type="match status" value="1"/>
</dbReference>
<comment type="catalytic activity">
    <reaction>
        <text>an acyl phosphate + H2O = a carboxylate + phosphate + H(+)</text>
        <dbReference type="Rhea" id="RHEA:14965"/>
        <dbReference type="ChEBI" id="CHEBI:15377"/>
        <dbReference type="ChEBI" id="CHEBI:15378"/>
        <dbReference type="ChEBI" id="CHEBI:29067"/>
        <dbReference type="ChEBI" id="CHEBI:43474"/>
        <dbReference type="ChEBI" id="CHEBI:59918"/>
        <dbReference type="EC" id="3.6.1.7"/>
    </reaction>
</comment>
<comment type="similarity">
    <text evidence="2">Belongs to the acylphosphatase family.</text>
</comment>
<proteinExistence type="inferred from homology"/>
<keyword id="KW-0378">Hydrolase</keyword>
<name>ACYP_MARN8</name>